<sequence length="367" mass="40982">MYPESTTDSPARLSLRQTGSPGMIYSARYGSPKRQLQFYRNLGKSGLRVSCLGLGTWVTFGGQITDEMAEQLMTLAYDNGINLFDTAEVYAAGKAEVVLGNIIKKKGWRRSSLVITTKIFWGGKAETERGLSRKHIIEGLKASLERLQLDYVDVVFANRPDPNTPMEETVRAMTHVINQGMAMYWGTSRWSSMEIMEAYSVARQFNLIPPICEQAEYHMFQREKVEVQLPELFHKIGVGAMTWSPLACGIVSGKYDGGIPPYSRASLKGYQWLKDKILSEEGRRQQAKLKEFQAIAERLGCTLPQLAIAWCLRNEGVSSVLLGASNADQLLENIGAIQVLPKLSSSIIHEIDGILGNKPYSKKDYRS</sequence>
<gene>
    <name type="primary">kcnab2</name>
    <name type="synonym">kvb-A</name>
    <name type="synonym">kvb2</name>
</gene>
<comment type="function">
    <text evidence="1 2 3">Regulatory subunit of the voltage-gated potassium (Kv) Shaker channels composed of pore-forming and potassium-conducting alpha subunits and of regulatory beta subunits (PubMed:10594054). The beta-2/KCNAB2 cytoplasmic subunit may promote potassium channel closure via a mechanism that does not involve physical obstruction of the channel pore (By similarity). Enhances current amplitude of Kv1.1/KCNA1 and Kv2.2/KCNA2 channels (PubMed:10594054). May display nicotinamide adenine dinucleotide phosphate (NADPH)-dependent aldoketoreductase activity by catalyzing the NADPH-dependent reduction of a wide range of aldehyde and ketone substrates. The binding of oxidized and reduced nucleotide may alter Kv channel gating and contribute to dynamic fine tuning of cell excitability (By similarity).</text>
</comment>
<comment type="subunit">
    <text>Forms heteromultimeric complex with alpha subunits.</text>
</comment>
<comment type="subcellular location">
    <subcellularLocation>
        <location evidence="1">Cytoplasm</location>
    </subcellularLocation>
    <subcellularLocation>
        <location evidence="1">Membrane</location>
        <topology evidence="4">Peripheral membrane protein</topology>
        <orientation evidence="4">Cytoplasmic side</orientation>
    </subcellularLocation>
    <subcellularLocation>
        <location evidence="1">Cell membrane</location>
        <topology evidence="4">Peripheral membrane protein</topology>
        <orientation evidence="4">Cytoplasmic side</orientation>
    </subcellularLocation>
    <subcellularLocation>
        <location evidence="1">Cell projection</location>
        <location evidence="1">Axon</location>
    </subcellularLocation>
    <subcellularLocation>
        <location evidence="1">Synapse</location>
        <location evidence="1">Synaptosome</location>
    </subcellularLocation>
    <subcellularLocation>
        <location evidence="1">Cytoplasm</location>
        <location evidence="1">Cytoskeleton</location>
    </subcellularLocation>
    <text evidence="1">Recruited to the cytoplasmic side of the cell membrane via its interaction with pore-forming potassium channel alpha subunits. Associates with microtubules when unphosphorylated.</text>
</comment>
<comment type="developmental stage">
    <text evidence="3">Expression first detected in somites at embryonic stage 24 (26 hours). At stage 29 (35 hours), expression is detected in the spinal cord. In stage 30 embryos (36 hours), expression is down-regulated in somites and up-regulated in spinal cord. By stage 35-36 (50 hours), expression is limited to dorsal spinal neurons of the spinal cord.</text>
</comment>
<comment type="domain">
    <text evidence="2">In contrast to KCNAB1, the shorter N-terminal domain of KCNAB2 cannot mediate closure of delayed rectifier potassium channels by physically obstructing the pore.</text>
</comment>
<comment type="similarity">
    <text evidence="4">Belongs to the shaker potassium channel beta subunit family.</text>
</comment>
<organism>
    <name type="scientific">Xenopus laevis</name>
    <name type="common">African clawed frog</name>
    <dbReference type="NCBI Taxonomy" id="8355"/>
    <lineage>
        <taxon>Eukaryota</taxon>
        <taxon>Metazoa</taxon>
        <taxon>Chordata</taxon>
        <taxon>Craniata</taxon>
        <taxon>Vertebrata</taxon>
        <taxon>Euteleostomi</taxon>
        <taxon>Amphibia</taxon>
        <taxon>Batrachia</taxon>
        <taxon>Anura</taxon>
        <taxon>Pipoidea</taxon>
        <taxon>Pipidae</taxon>
        <taxon>Xenopodinae</taxon>
        <taxon>Xenopus</taxon>
        <taxon>Xenopus</taxon>
    </lineage>
</organism>
<reference key="1">
    <citation type="journal article" date="1999" name="J. Neurosci.">
        <title>Xenopus embryonic spinal neurons express potassium channel Kvbeta subunits.</title>
        <authorList>
            <person name="Lazaroff M.A."/>
            <person name="Hofmann A.D."/>
            <person name="Ribera A.B."/>
        </authorList>
    </citation>
    <scope>NUCLEOTIDE SEQUENCE [MRNA]</scope>
    <scope>FUNCTION</scope>
    <scope>DEVELOPMENTAL STAGE</scope>
    <source>
        <tissue>Tadpole head</tissue>
    </source>
</reference>
<protein>
    <recommendedName>
        <fullName>Voltage-gated potassium channel subunit beta-2</fullName>
        <ecNumber evidence="1">1.1.1.-</ecNumber>
    </recommendedName>
    <alternativeName>
        <fullName>K(+) channel subunit beta-2</fullName>
    </alternativeName>
    <alternativeName>
        <fullName>Kv-beta-2</fullName>
    </alternativeName>
</protein>
<feature type="chain" id="PRO_0000148749" description="Voltage-gated potassium channel subunit beta-2">
    <location>
        <begin position="1"/>
        <end position="367"/>
    </location>
</feature>
<feature type="active site" description="Proton donor/acceptor" evidence="1">
    <location>
        <position position="90"/>
    </location>
</feature>
<feature type="binding site" evidence="1">
    <location>
        <position position="56"/>
    </location>
    <ligand>
        <name>NADP(+)</name>
        <dbReference type="ChEBI" id="CHEBI:58349"/>
    </ligand>
</feature>
<feature type="binding site" evidence="1">
    <location>
        <position position="57"/>
    </location>
    <ligand>
        <name>NADP(+)</name>
        <dbReference type="ChEBI" id="CHEBI:58349"/>
    </ligand>
</feature>
<feature type="binding site" evidence="1">
    <location>
        <position position="63"/>
    </location>
    <ligand>
        <name>NADP(+)</name>
        <dbReference type="ChEBI" id="CHEBI:58349"/>
    </ligand>
</feature>
<feature type="binding site" evidence="1">
    <location>
        <position position="85"/>
    </location>
    <ligand>
        <name>NADP(+)</name>
        <dbReference type="ChEBI" id="CHEBI:58349"/>
    </ligand>
</feature>
<feature type="binding site" evidence="1">
    <location>
        <position position="158"/>
    </location>
    <ligand>
        <name>NADP(+)</name>
        <dbReference type="ChEBI" id="CHEBI:58349"/>
    </ligand>
</feature>
<feature type="binding site" evidence="1">
    <location>
        <position position="188"/>
    </location>
    <ligand>
        <name>NADP(+)</name>
        <dbReference type="ChEBI" id="CHEBI:58349"/>
    </ligand>
</feature>
<feature type="binding site" evidence="1">
    <location>
        <position position="189"/>
    </location>
    <ligand>
        <name>NADP(+)</name>
        <dbReference type="ChEBI" id="CHEBI:58349"/>
    </ligand>
</feature>
<feature type="binding site" evidence="1">
    <location>
        <position position="214"/>
    </location>
    <ligand>
        <name>NADP(+)</name>
        <dbReference type="ChEBI" id="CHEBI:58349"/>
    </ligand>
</feature>
<feature type="binding site" evidence="1">
    <location>
        <position position="243"/>
    </location>
    <ligand>
        <name>NADP(+)</name>
        <dbReference type="ChEBI" id="CHEBI:58349"/>
    </ligand>
</feature>
<feature type="binding site" evidence="1">
    <location>
        <position position="244"/>
    </location>
    <ligand>
        <name>NADP(+)</name>
        <dbReference type="ChEBI" id="CHEBI:58349"/>
    </ligand>
</feature>
<feature type="binding site" evidence="1">
    <location>
        <position position="245"/>
    </location>
    <ligand>
        <name>NADP(+)</name>
        <dbReference type="ChEBI" id="CHEBI:58349"/>
    </ligand>
</feature>
<feature type="binding site" evidence="1">
    <location>
        <position position="246"/>
    </location>
    <ligand>
        <name>NADP(+)</name>
        <dbReference type="ChEBI" id="CHEBI:58349"/>
    </ligand>
</feature>
<feature type="binding site" evidence="1">
    <location>
        <position position="247"/>
    </location>
    <ligand>
        <name>NADP(+)</name>
        <dbReference type="ChEBI" id="CHEBI:58349"/>
    </ligand>
</feature>
<feature type="binding site" evidence="1">
    <location>
        <position position="248"/>
    </location>
    <ligand>
        <name>NADP(+)</name>
        <dbReference type="ChEBI" id="CHEBI:58349"/>
    </ligand>
</feature>
<feature type="binding site" evidence="1">
    <location>
        <position position="254"/>
    </location>
    <ligand>
        <name>NADP(+)</name>
        <dbReference type="ChEBI" id="CHEBI:58349"/>
    </ligand>
</feature>
<feature type="binding site" evidence="1">
    <location>
        <position position="262"/>
    </location>
    <ligand>
        <name>NADP(+)</name>
        <dbReference type="ChEBI" id="CHEBI:58349"/>
    </ligand>
</feature>
<feature type="binding site" evidence="1">
    <location>
        <position position="264"/>
    </location>
    <ligand>
        <name>NADP(+)</name>
        <dbReference type="ChEBI" id="CHEBI:58349"/>
    </ligand>
</feature>
<feature type="binding site" evidence="1">
    <location>
        <position position="323"/>
    </location>
    <ligand>
        <name>NADP(+)</name>
        <dbReference type="ChEBI" id="CHEBI:58349"/>
    </ligand>
</feature>
<feature type="binding site" evidence="1">
    <location>
        <position position="325"/>
    </location>
    <ligand>
        <name>NADP(+)</name>
        <dbReference type="ChEBI" id="CHEBI:58349"/>
    </ligand>
</feature>
<feature type="binding site" evidence="1">
    <location>
        <position position="329"/>
    </location>
    <ligand>
        <name>NADP(+)</name>
        <dbReference type="ChEBI" id="CHEBI:58349"/>
    </ligand>
</feature>
<feature type="binding site" evidence="1">
    <location>
        <position position="332"/>
    </location>
    <ligand>
        <name>NADP(+)</name>
        <dbReference type="ChEBI" id="CHEBI:58349"/>
    </ligand>
</feature>
<feature type="binding site" evidence="1">
    <location>
        <position position="333"/>
    </location>
    <ligand>
        <name>NADP(+)</name>
        <dbReference type="ChEBI" id="CHEBI:58349"/>
    </ligand>
</feature>
<proteinExistence type="evidence at transcript level"/>
<dbReference type="EC" id="1.1.1.-" evidence="1"/>
<dbReference type="EMBL" id="AF172144">
    <property type="protein sequence ID" value="AAD56312.1"/>
    <property type="status" value="ALT_SEQ"/>
    <property type="molecule type" value="mRNA"/>
</dbReference>
<dbReference type="RefSeq" id="XP_018079897.1">
    <property type="nucleotide sequence ID" value="XM_018224408.1"/>
</dbReference>
<dbReference type="SMR" id="Q9PTM5"/>
<dbReference type="DNASU" id="399149"/>
<dbReference type="GeneID" id="399149"/>
<dbReference type="AGR" id="Xenbase:XB-GENE-990282"/>
<dbReference type="CTD" id="399149"/>
<dbReference type="Xenbase" id="XB-GENE-990282">
    <property type="gene designation" value="kcnab2.L"/>
</dbReference>
<dbReference type="OrthoDB" id="1720422at2759"/>
<dbReference type="Proteomes" id="UP000186698">
    <property type="component" value="Chromosome 7L"/>
</dbReference>
<dbReference type="Bgee" id="399149">
    <property type="expression patterns" value="Expressed in brain and 18 other cell types or tissues"/>
</dbReference>
<dbReference type="GO" id="GO:0005856">
    <property type="term" value="C:cytoskeleton"/>
    <property type="evidence" value="ECO:0007669"/>
    <property type="project" value="UniProtKB-SubCell"/>
</dbReference>
<dbReference type="GO" id="GO:0005829">
    <property type="term" value="C:cytosol"/>
    <property type="evidence" value="ECO:0000250"/>
    <property type="project" value="UniProtKB"/>
</dbReference>
<dbReference type="GO" id="GO:0044224">
    <property type="term" value="C:juxtaparanode region of axon"/>
    <property type="evidence" value="ECO:0000318"/>
    <property type="project" value="GO_Central"/>
</dbReference>
<dbReference type="GO" id="GO:0045202">
    <property type="term" value="C:synapse"/>
    <property type="evidence" value="ECO:0007669"/>
    <property type="project" value="UniProtKB-SubCell"/>
</dbReference>
<dbReference type="GO" id="GO:0008076">
    <property type="term" value="C:voltage-gated potassium channel complex"/>
    <property type="evidence" value="ECO:0000318"/>
    <property type="project" value="GO_Central"/>
</dbReference>
<dbReference type="GO" id="GO:0004033">
    <property type="term" value="F:aldo-keto reductase (NADPH) activity"/>
    <property type="evidence" value="ECO:0000250"/>
    <property type="project" value="UniProtKB"/>
</dbReference>
<dbReference type="GO" id="GO:0015459">
    <property type="term" value="F:potassium channel regulator activity"/>
    <property type="evidence" value="ECO:0000250"/>
    <property type="project" value="UniProtKB"/>
</dbReference>
<dbReference type="GO" id="GO:0044325">
    <property type="term" value="F:transmembrane transporter binding"/>
    <property type="evidence" value="ECO:0000318"/>
    <property type="project" value="GO_Central"/>
</dbReference>
<dbReference type="GO" id="GO:0005249">
    <property type="term" value="F:voltage-gated potassium channel activity"/>
    <property type="evidence" value="ECO:0007669"/>
    <property type="project" value="InterPro"/>
</dbReference>
<dbReference type="GO" id="GO:0098900">
    <property type="term" value="P:regulation of action potential"/>
    <property type="evidence" value="ECO:0007669"/>
    <property type="project" value="TreeGrafter"/>
</dbReference>
<dbReference type="GO" id="GO:1901379">
    <property type="term" value="P:regulation of potassium ion transmembrane transport"/>
    <property type="evidence" value="ECO:0000250"/>
    <property type="project" value="UniProtKB"/>
</dbReference>
<dbReference type="CDD" id="cd19141">
    <property type="entry name" value="Aldo_ket_red_shaker"/>
    <property type="match status" value="1"/>
</dbReference>
<dbReference type="FunFam" id="3.20.20.100:FF:000001">
    <property type="entry name" value="voltage-gated potassium channel subunit beta-2 isoform X2"/>
    <property type="match status" value="1"/>
</dbReference>
<dbReference type="Gene3D" id="3.20.20.100">
    <property type="entry name" value="NADP-dependent oxidoreductase domain"/>
    <property type="match status" value="1"/>
</dbReference>
<dbReference type="InterPro" id="IPR005983">
    <property type="entry name" value="K_chnl_volt-dep_bsu_KCNAB"/>
</dbReference>
<dbReference type="InterPro" id="IPR005399">
    <property type="entry name" value="K_chnl_volt-dep_bsu_KCNAB-rel"/>
</dbReference>
<dbReference type="InterPro" id="IPR005401">
    <property type="entry name" value="K_chnl_volt-dep_bsu_KCNAB2"/>
</dbReference>
<dbReference type="InterPro" id="IPR023210">
    <property type="entry name" value="NADP_OxRdtase_dom"/>
</dbReference>
<dbReference type="InterPro" id="IPR036812">
    <property type="entry name" value="NADP_OxRdtase_dom_sf"/>
</dbReference>
<dbReference type="NCBIfam" id="TIGR01293">
    <property type="entry name" value="Kv_beta"/>
    <property type="match status" value="1"/>
</dbReference>
<dbReference type="PANTHER" id="PTHR43150">
    <property type="entry name" value="HYPERKINETIC, ISOFORM M"/>
    <property type="match status" value="1"/>
</dbReference>
<dbReference type="PANTHER" id="PTHR43150:SF1">
    <property type="entry name" value="VOLTAGE-GATED POTASSIUM CHANNEL SUBUNIT BETA-2"/>
    <property type="match status" value="1"/>
</dbReference>
<dbReference type="Pfam" id="PF00248">
    <property type="entry name" value="Aldo_ket_red"/>
    <property type="match status" value="1"/>
</dbReference>
<dbReference type="PRINTS" id="PR01579">
    <property type="entry name" value="KCNAB2CHANEL"/>
</dbReference>
<dbReference type="PRINTS" id="PR01577">
    <property type="entry name" value="KCNABCHANNEL"/>
</dbReference>
<dbReference type="SUPFAM" id="SSF51430">
    <property type="entry name" value="NAD(P)-linked oxidoreductase"/>
    <property type="match status" value="1"/>
</dbReference>
<name>KCAB2_XENLA</name>
<accession>Q9PTM5</accession>
<keyword id="KW-1003">Cell membrane</keyword>
<keyword id="KW-0966">Cell projection</keyword>
<keyword id="KW-0963">Cytoplasm</keyword>
<keyword id="KW-0206">Cytoskeleton</keyword>
<keyword id="KW-0406">Ion transport</keyword>
<keyword id="KW-0472">Membrane</keyword>
<keyword id="KW-0521">NADP</keyword>
<keyword id="KW-0560">Oxidoreductase</keyword>
<keyword id="KW-0630">Potassium</keyword>
<keyword id="KW-0633">Potassium transport</keyword>
<keyword id="KW-1185">Reference proteome</keyword>
<keyword id="KW-0770">Synapse</keyword>
<keyword id="KW-0771">Synaptosome</keyword>
<keyword id="KW-0813">Transport</keyword>
<evidence type="ECO:0000250" key="1">
    <source>
        <dbReference type="UniProtKB" id="P62483"/>
    </source>
</evidence>
<evidence type="ECO:0000250" key="2">
    <source>
        <dbReference type="UniProtKB" id="Q13303"/>
    </source>
</evidence>
<evidence type="ECO:0000269" key="3">
    <source>
    </source>
</evidence>
<evidence type="ECO:0000305" key="4"/>